<sequence length="308" mass="32990">MSEQFLYFLQQMFNGVTLGSTYALIAIGYTMVYGIIGMINFAHGEVYMIGSYVSFMIIAALMMMGIDTSWLLVAAGFIGAIIIASAYGWSIERVAYRPVRNSKRLIALISAIGMSIFLQNYVSLTEGSRDVALPSLFNGQWIVGSSENFSASITTMQAVIWIVTFLAMLALTIFIRYSRMGRACRACAEDLKMASLLGINTDRVIALTFVIGAAMAAVAGVLLGQFYGVINPYIGFMAGMKAFTAAVLGGIGSIPGAMIGGLILGVAEALSSAYLSTEYKDVVSFALLILVLLVMPTGILGRPEVEKV</sequence>
<proteinExistence type="inferred from homology"/>
<name>LIVH_SALTI</name>
<organism>
    <name type="scientific">Salmonella typhi</name>
    <dbReference type="NCBI Taxonomy" id="90370"/>
    <lineage>
        <taxon>Bacteria</taxon>
        <taxon>Pseudomonadati</taxon>
        <taxon>Pseudomonadota</taxon>
        <taxon>Gammaproteobacteria</taxon>
        <taxon>Enterobacterales</taxon>
        <taxon>Enterobacteriaceae</taxon>
        <taxon>Salmonella</taxon>
    </lineage>
</organism>
<feature type="chain" id="PRO_0000060060" description="High-affinity branched-chain amino acid transport system permease protein LivH">
    <location>
        <begin position="1"/>
        <end position="308"/>
    </location>
</feature>
<feature type="topological domain" description="Cytoplasmic" evidence="2">
    <location>
        <begin position="1"/>
        <end position="21"/>
    </location>
</feature>
<feature type="transmembrane region" description="Helical" evidence="2">
    <location>
        <begin position="22"/>
        <end position="42"/>
    </location>
</feature>
<feature type="topological domain" description="Periplasmic" evidence="2">
    <location>
        <begin position="43"/>
        <end position="45"/>
    </location>
</feature>
<feature type="transmembrane region" description="Helical" evidence="2">
    <location>
        <begin position="46"/>
        <end position="66"/>
    </location>
</feature>
<feature type="topological domain" description="Cytoplasmic" evidence="2">
    <location>
        <begin position="67"/>
        <end position="70"/>
    </location>
</feature>
<feature type="transmembrane region" description="Helical" evidence="2">
    <location>
        <begin position="71"/>
        <end position="91"/>
    </location>
</feature>
<feature type="topological domain" description="Periplasmic" evidence="2">
    <location>
        <begin position="92"/>
        <end position="104"/>
    </location>
</feature>
<feature type="transmembrane region" description="Helical" evidence="2">
    <location>
        <begin position="105"/>
        <end position="125"/>
    </location>
</feature>
<feature type="topological domain" description="Cytoplasmic" evidence="2">
    <location>
        <begin position="126"/>
        <end position="154"/>
    </location>
</feature>
<feature type="transmembrane region" description="Helical" evidence="2">
    <location>
        <begin position="155"/>
        <end position="175"/>
    </location>
</feature>
<feature type="topological domain" description="Periplasmic" evidence="2">
    <location>
        <begin position="176"/>
        <end position="203"/>
    </location>
</feature>
<feature type="transmembrane region" description="Helical" evidence="2">
    <location>
        <begin position="204"/>
        <end position="224"/>
    </location>
</feature>
<feature type="topological domain" description="Cytoplasmic" evidence="2">
    <location>
        <begin position="225"/>
        <end position="246"/>
    </location>
</feature>
<feature type="transmembrane region" description="Helical" evidence="2">
    <location>
        <begin position="247"/>
        <end position="266"/>
    </location>
</feature>
<feature type="topological domain" description="Periplasmic" evidence="2">
    <location>
        <begin position="267"/>
        <end position="280"/>
    </location>
</feature>
<feature type="transmembrane region" description="Helical" evidence="2">
    <location>
        <begin position="281"/>
        <end position="301"/>
    </location>
</feature>
<feature type="topological domain" description="Cytoplasmic" evidence="2">
    <location>
        <begin position="302"/>
        <end position="308"/>
    </location>
</feature>
<accession>P0A2J2</accession>
<accession>P30295</accession>
<keyword id="KW-0029">Amino-acid transport</keyword>
<keyword id="KW-0997">Cell inner membrane</keyword>
<keyword id="KW-1003">Cell membrane</keyword>
<keyword id="KW-0472">Membrane</keyword>
<keyword id="KW-0812">Transmembrane</keyword>
<keyword id="KW-1133">Transmembrane helix</keyword>
<keyword id="KW-0813">Transport</keyword>
<protein>
    <recommendedName>
        <fullName>High-affinity branched-chain amino acid transport system permease protein LivH</fullName>
    </recommendedName>
    <alternativeName>
        <fullName>LIV-I protein H</fullName>
    </alternativeName>
</protein>
<dbReference type="EMBL" id="AL513382">
    <property type="protein sequence ID" value="CAD08067.1"/>
    <property type="molecule type" value="Genomic_DNA"/>
</dbReference>
<dbReference type="EMBL" id="AE014613">
    <property type="protein sequence ID" value="AAO71429.1"/>
    <property type="molecule type" value="Genomic_DNA"/>
</dbReference>
<dbReference type="RefSeq" id="NP_458357.1">
    <property type="nucleotide sequence ID" value="NC_003198.1"/>
</dbReference>
<dbReference type="RefSeq" id="WP_000003007.1">
    <property type="nucleotide sequence ID" value="NZ_WSUR01000001.1"/>
</dbReference>
<dbReference type="STRING" id="220341.gene:17588080"/>
<dbReference type="KEGG" id="stt:t3959"/>
<dbReference type="KEGG" id="sty:STY4249"/>
<dbReference type="PATRIC" id="fig|220341.7.peg.4339"/>
<dbReference type="eggNOG" id="COG0559">
    <property type="taxonomic scope" value="Bacteria"/>
</dbReference>
<dbReference type="HOGENOM" id="CLU_039929_3_1_6"/>
<dbReference type="OMA" id="NMGWFLI"/>
<dbReference type="OrthoDB" id="9807115at2"/>
<dbReference type="Proteomes" id="UP000000541">
    <property type="component" value="Chromosome"/>
</dbReference>
<dbReference type="Proteomes" id="UP000002670">
    <property type="component" value="Chromosome"/>
</dbReference>
<dbReference type="GO" id="GO:0005886">
    <property type="term" value="C:plasma membrane"/>
    <property type="evidence" value="ECO:0007669"/>
    <property type="project" value="UniProtKB-SubCell"/>
</dbReference>
<dbReference type="GO" id="GO:0015188">
    <property type="term" value="F:L-isoleucine transmembrane transporter activity"/>
    <property type="evidence" value="ECO:0007669"/>
    <property type="project" value="TreeGrafter"/>
</dbReference>
<dbReference type="GO" id="GO:0015190">
    <property type="term" value="F:L-leucine transmembrane transporter activity"/>
    <property type="evidence" value="ECO:0007669"/>
    <property type="project" value="TreeGrafter"/>
</dbReference>
<dbReference type="GO" id="GO:0015192">
    <property type="term" value="F:L-phenylalanine transmembrane transporter activity"/>
    <property type="evidence" value="ECO:0007669"/>
    <property type="project" value="TreeGrafter"/>
</dbReference>
<dbReference type="GO" id="GO:0005304">
    <property type="term" value="F:L-valine transmembrane transporter activity"/>
    <property type="evidence" value="ECO:0007669"/>
    <property type="project" value="TreeGrafter"/>
</dbReference>
<dbReference type="GO" id="GO:0042941">
    <property type="term" value="P:D-alanine transmembrane transport"/>
    <property type="evidence" value="ECO:0007669"/>
    <property type="project" value="TreeGrafter"/>
</dbReference>
<dbReference type="GO" id="GO:0015808">
    <property type="term" value="P:L-alanine transport"/>
    <property type="evidence" value="ECO:0007669"/>
    <property type="project" value="TreeGrafter"/>
</dbReference>
<dbReference type="GO" id="GO:1903806">
    <property type="term" value="P:L-isoleucine import across plasma membrane"/>
    <property type="evidence" value="ECO:0007669"/>
    <property type="project" value="TreeGrafter"/>
</dbReference>
<dbReference type="CDD" id="cd06582">
    <property type="entry name" value="TM_PBP1_LivH_like"/>
    <property type="match status" value="1"/>
</dbReference>
<dbReference type="InterPro" id="IPR001851">
    <property type="entry name" value="ABC_transp_permease"/>
</dbReference>
<dbReference type="InterPro" id="IPR052157">
    <property type="entry name" value="BCAA_transport_permease"/>
</dbReference>
<dbReference type="NCBIfam" id="NF008011">
    <property type="entry name" value="PRK10740.1"/>
    <property type="match status" value="1"/>
</dbReference>
<dbReference type="PANTHER" id="PTHR11795">
    <property type="entry name" value="BRANCHED-CHAIN AMINO ACID TRANSPORT SYSTEM PERMEASE PROTEIN LIVH"/>
    <property type="match status" value="1"/>
</dbReference>
<dbReference type="PANTHER" id="PTHR11795:SF371">
    <property type="entry name" value="HIGH-AFFINITY BRANCHED-CHAIN AMINO ACID TRANSPORT SYSTEM PERMEASE PROTEIN LIVH"/>
    <property type="match status" value="1"/>
</dbReference>
<dbReference type="Pfam" id="PF02653">
    <property type="entry name" value="BPD_transp_2"/>
    <property type="match status" value="1"/>
</dbReference>
<comment type="function">
    <text evidence="1">Part of the binding-protein-dependent transport system for branched-chain amino acids. Probably responsible for the translocation of the substrates across the membrane (By similarity).</text>
</comment>
<comment type="subcellular location">
    <subcellularLocation>
        <location evidence="1">Cell inner membrane</location>
        <topology evidence="1">Multi-pass membrane protein</topology>
    </subcellularLocation>
</comment>
<comment type="similarity">
    <text evidence="3">Belongs to the binding-protein-dependent transport system permease family. LivHM subfamily.</text>
</comment>
<gene>
    <name type="primary">livH</name>
    <name type="synonym">livA</name>
    <name type="ordered locus">STY4249</name>
    <name type="ordered locus">t3959</name>
</gene>
<reference key="1">
    <citation type="journal article" date="2001" name="Nature">
        <title>Complete genome sequence of a multiple drug resistant Salmonella enterica serovar Typhi CT18.</title>
        <authorList>
            <person name="Parkhill J."/>
            <person name="Dougan G."/>
            <person name="James K.D."/>
            <person name="Thomson N.R."/>
            <person name="Pickard D."/>
            <person name="Wain J."/>
            <person name="Churcher C.M."/>
            <person name="Mungall K.L."/>
            <person name="Bentley S.D."/>
            <person name="Holden M.T.G."/>
            <person name="Sebaihia M."/>
            <person name="Baker S."/>
            <person name="Basham D."/>
            <person name="Brooks K."/>
            <person name="Chillingworth T."/>
            <person name="Connerton P."/>
            <person name="Cronin A."/>
            <person name="Davis P."/>
            <person name="Davies R.M."/>
            <person name="Dowd L."/>
            <person name="White N."/>
            <person name="Farrar J."/>
            <person name="Feltwell T."/>
            <person name="Hamlin N."/>
            <person name="Haque A."/>
            <person name="Hien T.T."/>
            <person name="Holroyd S."/>
            <person name="Jagels K."/>
            <person name="Krogh A."/>
            <person name="Larsen T.S."/>
            <person name="Leather S."/>
            <person name="Moule S."/>
            <person name="O'Gaora P."/>
            <person name="Parry C."/>
            <person name="Quail M.A."/>
            <person name="Rutherford K.M."/>
            <person name="Simmonds M."/>
            <person name="Skelton J."/>
            <person name="Stevens K."/>
            <person name="Whitehead S."/>
            <person name="Barrell B.G."/>
        </authorList>
    </citation>
    <scope>NUCLEOTIDE SEQUENCE [LARGE SCALE GENOMIC DNA]</scope>
    <source>
        <strain>CT18</strain>
    </source>
</reference>
<reference key="2">
    <citation type="journal article" date="2003" name="J. Bacteriol.">
        <title>Comparative genomics of Salmonella enterica serovar Typhi strains Ty2 and CT18.</title>
        <authorList>
            <person name="Deng W."/>
            <person name="Liou S.-R."/>
            <person name="Plunkett G. III"/>
            <person name="Mayhew G.F."/>
            <person name="Rose D.J."/>
            <person name="Burland V."/>
            <person name="Kodoyianni V."/>
            <person name="Schwartz D.C."/>
            <person name="Blattner F.R."/>
        </authorList>
    </citation>
    <scope>NUCLEOTIDE SEQUENCE [LARGE SCALE GENOMIC DNA]</scope>
    <source>
        <strain>ATCC 700931 / Ty2</strain>
    </source>
</reference>
<evidence type="ECO:0000250" key="1"/>
<evidence type="ECO:0000255" key="2"/>
<evidence type="ECO:0000305" key="3"/>